<organism evidence="6">
    <name type="scientific">Caenorhabditis elegans</name>
    <dbReference type="NCBI Taxonomy" id="6239"/>
    <lineage>
        <taxon>Eukaryota</taxon>
        <taxon>Metazoa</taxon>
        <taxon>Ecdysozoa</taxon>
        <taxon>Nematoda</taxon>
        <taxon>Chromadorea</taxon>
        <taxon>Rhabditida</taxon>
        <taxon>Rhabditina</taxon>
        <taxon>Rhabditomorpha</taxon>
        <taxon>Rhabditoidea</taxon>
        <taxon>Rhabditidae</taxon>
        <taxon>Peloderinae</taxon>
        <taxon>Caenorhabditis</taxon>
    </lineage>
</organism>
<feature type="chain" id="PRO_0000455829" description="Kinesin-like protein klp-19">
    <location>
        <begin position="1"/>
        <end position="1083"/>
    </location>
</feature>
<feature type="domain" description="Kinesin motor" evidence="2">
    <location>
        <begin position="6"/>
        <end position="328"/>
    </location>
</feature>
<feature type="region of interest" description="Disordered" evidence="3">
    <location>
        <begin position="458"/>
        <end position="479"/>
    </location>
</feature>
<feature type="region of interest" description="Disordered" evidence="3">
    <location>
        <begin position="1044"/>
        <end position="1083"/>
    </location>
</feature>
<feature type="coiled-coil region" evidence="1">
    <location>
        <begin position="408"/>
        <end position="435"/>
    </location>
</feature>
<feature type="coiled-coil region" evidence="1">
    <location>
        <begin position="487"/>
        <end position="650"/>
    </location>
</feature>
<feature type="compositionally biased region" description="Acidic residues" evidence="3">
    <location>
        <begin position="458"/>
        <end position="471"/>
    </location>
</feature>
<feature type="compositionally biased region" description="Polar residues" evidence="3">
    <location>
        <begin position="1044"/>
        <end position="1055"/>
    </location>
</feature>
<feature type="binding site" evidence="2">
    <location>
        <begin position="85"/>
        <end position="92"/>
    </location>
    <ligand>
        <name>ATP</name>
        <dbReference type="ChEBI" id="CHEBI:30616"/>
    </ligand>
</feature>
<evidence type="ECO:0000255" key="1"/>
<evidence type="ECO:0000255" key="2">
    <source>
        <dbReference type="PROSITE-ProRule" id="PRU00283"/>
    </source>
</evidence>
<evidence type="ECO:0000256" key="3">
    <source>
        <dbReference type="SAM" id="MobiDB-lite"/>
    </source>
</evidence>
<evidence type="ECO:0000269" key="4">
    <source>
    </source>
</evidence>
<evidence type="ECO:0000305" key="5"/>
<evidence type="ECO:0000312" key="6">
    <source>
        <dbReference type="Proteomes" id="UP000001940"/>
    </source>
</evidence>
<evidence type="ECO:0000312" key="7">
    <source>
        <dbReference type="WormBase" id="Y43F4B.6"/>
    </source>
</evidence>
<protein>
    <recommendedName>
        <fullName>Kinesin-like protein klp-19</fullName>
    </recommendedName>
</protein>
<accession>O45935</accession>
<proteinExistence type="evidence at transcript level"/>
<dbReference type="EMBL" id="BX284603">
    <property type="protein sequence ID" value="CAA16335.1"/>
    <property type="molecule type" value="Genomic_DNA"/>
</dbReference>
<dbReference type="PIR" id="T26844">
    <property type="entry name" value="T26844"/>
</dbReference>
<dbReference type="RefSeq" id="NP_499742.1">
    <property type="nucleotide sequence ID" value="NM_067341.4"/>
</dbReference>
<dbReference type="SMR" id="O45935"/>
<dbReference type="DIP" id="DIP-24548N"/>
<dbReference type="FunCoup" id="O45935">
    <property type="interactions" value="849"/>
</dbReference>
<dbReference type="IntAct" id="O45935">
    <property type="interactions" value="1"/>
</dbReference>
<dbReference type="STRING" id="6239.Y43F4B.6.1"/>
<dbReference type="PaxDb" id="6239-Y43F4B.6"/>
<dbReference type="PeptideAtlas" id="O45935"/>
<dbReference type="EnsemblMetazoa" id="Y43F4B.6.1">
    <property type="protein sequence ID" value="Y43F4B.6.1"/>
    <property type="gene ID" value="WBGene00002229"/>
</dbReference>
<dbReference type="GeneID" id="176750"/>
<dbReference type="KEGG" id="cel:CELE_Y43F4B.6"/>
<dbReference type="UCSC" id="Y43F4B.6.1">
    <property type="organism name" value="c. elegans"/>
</dbReference>
<dbReference type="AGR" id="WB:WBGene00002229"/>
<dbReference type="CTD" id="176750"/>
<dbReference type="WormBase" id="Y43F4B.6">
    <property type="protein sequence ID" value="CE16631"/>
    <property type="gene ID" value="WBGene00002229"/>
    <property type="gene designation" value="klp-19"/>
</dbReference>
<dbReference type="eggNOG" id="KOG0244">
    <property type="taxonomic scope" value="Eukaryota"/>
</dbReference>
<dbReference type="GeneTree" id="ENSGT00940000169248"/>
<dbReference type="HOGENOM" id="CLU_285326_0_0_1"/>
<dbReference type="InParanoid" id="O45935"/>
<dbReference type="OMA" id="QLWEKNM"/>
<dbReference type="OrthoDB" id="3176171at2759"/>
<dbReference type="PhylomeDB" id="O45935"/>
<dbReference type="Reactome" id="R-CEL-6811434">
    <property type="pathway name" value="COPI-dependent Golgi-to-ER retrograde traffic"/>
</dbReference>
<dbReference type="Reactome" id="R-CEL-983189">
    <property type="pathway name" value="Kinesins"/>
</dbReference>
<dbReference type="PRO" id="PR:O45935"/>
<dbReference type="Proteomes" id="UP000001940">
    <property type="component" value="Chromosome III"/>
</dbReference>
<dbReference type="Bgee" id="WBGene00002229">
    <property type="expression patterns" value="Expressed in adult organism and 3 other cell types or tissues"/>
</dbReference>
<dbReference type="GO" id="GO:0005694">
    <property type="term" value="C:chromosome"/>
    <property type="evidence" value="ECO:0000314"/>
    <property type="project" value="WormBase"/>
</dbReference>
<dbReference type="GO" id="GO:0000794">
    <property type="term" value="C:condensed nuclear chromosome"/>
    <property type="evidence" value="ECO:0000314"/>
    <property type="project" value="WormBase"/>
</dbReference>
<dbReference type="GO" id="GO:0005737">
    <property type="term" value="C:cytoplasm"/>
    <property type="evidence" value="ECO:0000318"/>
    <property type="project" value="GO_Central"/>
</dbReference>
<dbReference type="GO" id="GO:0005871">
    <property type="term" value="C:kinesin complex"/>
    <property type="evidence" value="ECO:0000318"/>
    <property type="project" value="GO_Central"/>
</dbReference>
<dbReference type="GO" id="GO:0005874">
    <property type="term" value="C:microtubule"/>
    <property type="evidence" value="ECO:0000318"/>
    <property type="project" value="GO_Central"/>
</dbReference>
<dbReference type="GO" id="GO:0005654">
    <property type="term" value="C:nucleoplasm"/>
    <property type="evidence" value="ECO:0000314"/>
    <property type="project" value="WormBase"/>
</dbReference>
<dbReference type="GO" id="GO:0005819">
    <property type="term" value="C:spindle"/>
    <property type="evidence" value="ECO:0000314"/>
    <property type="project" value="WormBase"/>
</dbReference>
<dbReference type="GO" id="GO:0005524">
    <property type="term" value="F:ATP binding"/>
    <property type="evidence" value="ECO:0007669"/>
    <property type="project" value="UniProtKB-KW"/>
</dbReference>
<dbReference type="GO" id="GO:0016887">
    <property type="term" value="F:ATP hydrolysis activity"/>
    <property type="evidence" value="ECO:0000318"/>
    <property type="project" value="GO_Central"/>
</dbReference>
<dbReference type="GO" id="GO:0008017">
    <property type="term" value="F:microtubule binding"/>
    <property type="evidence" value="ECO:0000318"/>
    <property type="project" value="GO_Central"/>
</dbReference>
<dbReference type="GO" id="GO:0003777">
    <property type="term" value="F:microtubule motor activity"/>
    <property type="evidence" value="ECO:0000318"/>
    <property type="project" value="GO_Central"/>
</dbReference>
<dbReference type="GO" id="GO:0051301">
    <property type="term" value="P:cell division"/>
    <property type="evidence" value="ECO:0007669"/>
    <property type="project" value="UniProtKB-KW"/>
</dbReference>
<dbReference type="GO" id="GO:0010032">
    <property type="term" value="P:meiotic chromosome condensation"/>
    <property type="evidence" value="ECO:0000315"/>
    <property type="project" value="UniProtKB"/>
</dbReference>
<dbReference type="GO" id="GO:0051257">
    <property type="term" value="P:meiotic spindle midzone assembly"/>
    <property type="evidence" value="ECO:0000315"/>
    <property type="project" value="UniProtKB"/>
</dbReference>
<dbReference type="GO" id="GO:0007018">
    <property type="term" value="P:microtubule-based movement"/>
    <property type="evidence" value="ECO:0000318"/>
    <property type="project" value="GO_Central"/>
</dbReference>
<dbReference type="CDD" id="cd00106">
    <property type="entry name" value="KISc"/>
    <property type="match status" value="1"/>
</dbReference>
<dbReference type="Gene3D" id="3.40.850.10">
    <property type="entry name" value="Kinesin motor domain"/>
    <property type="match status" value="1"/>
</dbReference>
<dbReference type="InterPro" id="IPR027640">
    <property type="entry name" value="Kinesin-like_fam"/>
</dbReference>
<dbReference type="InterPro" id="IPR019821">
    <property type="entry name" value="Kinesin_motor_CS"/>
</dbReference>
<dbReference type="InterPro" id="IPR001752">
    <property type="entry name" value="Kinesin_motor_dom"/>
</dbReference>
<dbReference type="InterPro" id="IPR036961">
    <property type="entry name" value="Kinesin_motor_dom_sf"/>
</dbReference>
<dbReference type="InterPro" id="IPR027417">
    <property type="entry name" value="P-loop_NTPase"/>
</dbReference>
<dbReference type="PANTHER" id="PTHR47969">
    <property type="entry name" value="CHROMOSOME-ASSOCIATED KINESIN KIF4A-RELATED"/>
    <property type="match status" value="1"/>
</dbReference>
<dbReference type="PANTHER" id="PTHR47969:SF15">
    <property type="entry name" value="CHROMOSOME-ASSOCIATED KINESIN KIF4A-RELATED"/>
    <property type="match status" value="1"/>
</dbReference>
<dbReference type="Pfam" id="PF00225">
    <property type="entry name" value="Kinesin"/>
    <property type="match status" value="1"/>
</dbReference>
<dbReference type="PRINTS" id="PR00380">
    <property type="entry name" value="KINESINHEAVY"/>
</dbReference>
<dbReference type="SMART" id="SM00129">
    <property type="entry name" value="KISc"/>
    <property type="match status" value="1"/>
</dbReference>
<dbReference type="SUPFAM" id="SSF52540">
    <property type="entry name" value="P-loop containing nucleoside triphosphate hydrolases"/>
    <property type="match status" value="1"/>
</dbReference>
<dbReference type="PROSITE" id="PS00411">
    <property type="entry name" value="KINESIN_MOTOR_1"/>
    <property type="match status" value="1"/>
</dbReference>
<dbReference type="PROSITE" id="PS50067">
    <property type="entry name" value="KINESIN_MOTOR_2"/>
    <property type="match status" value="1"/>
</dbReference>
<sequence>MSSDASLRVVVRARPMNGRETKEGASRCVQFYENTKQIVINESATFTFDAVFADTSDQESVYETTALPLLDRIFAGFNATVLAYGQTGSGKTYTMGTEDNVGTDEMRRGIIPRLVSALFQRIMNTEAPESFAVTVSMFEVYGDNVYDLLRPDKVKLNVHGDEKNCTVVNLTAVPVIDLKGALKQLAVGCHYRTKAETAMNAMSSRSHAVFTVFVEKTATAECDSAFSAKLQLVDLAGSERLKKTEAEGNRMKEGININGGLLILSQVIAALATKQKHIPYRNSVITRVLQDSLGGNSFTVFLACISPADSNSQETLNTLRYADRAKQIKNKPIVNKNPKAEEIAILQAQLKRLQKENADLKQGIAPAEVRFNDANNSAEILSLKEEVVRKTEQLKERAMKQSECIIRMSALTQKNSRLEEDKAKLQSMLTDVRNTVLNEEMLDAAEVVRSIQQVVGDTEESTTLADDDNDETALGGQDDTIYDTERLPELQAELDDLEKQIAMKDENRQKALDEQRAFIEAMQQRESEKTQLVVRISELETEMNKLRQEGKKVTTAAKLAEERRQKLKDLERQHAEDKKVLNDMKKLQETRRRMEETLKKTEDELKNLKTQRLRLLREQRAEASKFQAFKQKHEREMAQMKSKLQKRENDVAIQKRMTDQKLTVLQMRLTEANRANKTLRELNLKRANRKSSPTNASALQNMIEEELEHEMCAQRSHWLCEDLRRQRHDLMQNINTVESMKFEGGKRRRISASADPNVSVVIEGEEEFEVKRQKELTFLRASLETLNEEIKDSLRNETIAGNEERANSRWEKVPAEMRPAFEAVYAQAVAHIRKEIELEFKLARTKSEFTAKIASKASHEEKRKKEDEEMRAKYRELAQCLEDAKSGLHEKIAFLLCLIKENRVDENAIQQFESLKNQFCDVEQKVKKASRRKTTNFMGGLTPKPELQRNERARRAVKYYGNVVNSEDVTMDDSRHQKRKDHSLLAVEMNRTTDDNVKRRVAMSPIKCDDDTRLTEEDEDIENEAMNNATFVKDSFNSATIVLDDSQPSPSNSTFVIGAAPTSEADGVPPIKRKSRRTDLGPL</sequence>
<gene>
    <name evidence="7" type="primary">klp-19</name>
    <name evidence="7" type="ORF">Y43F4B.6</name>
</gene>
<comment type="function">
    <text evidence="4">Required for chromosome movement and orientation on spindle poles in mitosis and meiosis (PubMed:15452142). May play a role in early anterior-posterior chromosome movement in mitotic embryos (PubMed:15452142).</text>
</comment>
<comment type="subcellular location">
    <subcellularLocation>
        <location evidence="4">Nucleus</location>
        <location evidence="4">Nucleoplasm</location>
    </subcellularLocation>
    <subcellularLocation>
        <location evidence="4">Nucleus</location>
    </subcellularLocation>
    <subcellularLocation>
        <location evidence="4">Cytoplasm</location>
        <location evidence="4">Cytoskeleton</location>
        <location evidence="4">Spindle</location>
    </subcellularLocation>
    <subcellularLocation>
        <location evidence="4">Chromosome</location>
    </subcellularLocation>
    <text evidence="4">Localizes to nuclei of the distal mitotic zone (PubMed:15452142). During mitotic prophase in embryos, localizes to the nucleoplasm (PubMed:15452142). In prometaphase, localizes to the body of the spindle and the periphery of chromosomes (PubMed:15452142). In anaphase, localizes to the spindle interzone (PubMed:15452142). Localizes to early meiotic prophase nuclei and to the nucleoplasm in late prophase (PubMed:15452142). Localizes to prophase chromosomes before fertilization (PubMed:15452142). During metaphase of meiosis I and meiosis II, localizes to the body of the spindle, around the periphery of chromosomes, and between homologous chromosomes (PubMed:15452142).</text>
</comment>
<comment type="tissue specificity">
    <text evidence="4">Expressed in the gonad.</text>
</comment>
<comment type="developmental stage">
    <text evidence="4">Expressed in embryos.</text>
</comment>
<comment type="disruption phenotype">
    <text evidence="4">RNAi-mediated knockdown results in embryos that undergo early mitotic divisions as in wild-type, but which later then display aberrant patterns of nuclei and arrest before morphogenesis (PubMed:15452142). RNAi-mediated knockdown results in chromosome segregation defects in mitotic embryos whereby chromosomes form a disordered metaphase plate and multiple chromosomes exhibit delays in segregation resulting in the formation of bridges during anaphase (PubMed:15452142). The chromosome bridges stretch, break and sometimes form micronuclei (PubMed:15452142). RNAi-mediated knockdown results in kinetochore orientation defects in anaphase spindles in embryos in which kinetochores do not align on the spindle and some kinetochores stretch across the spindle interzone, parallel to the pole-pole axis (PubMed:15452142). RNAi-mediated knockdown does not cause defects in spindle architecture or cytokinesis in embryos (PubMed:15452142).</text>
</comment>
<comment type="similarity">
    <text evidence="2">Belongs to the TRAFAC class myosin-kinesin ATPase superfamily. Kinesin family.</text>
</comment>
<keyword id="KW-0067">ATP-binding</keyword>
<keyword id="KW-0131">Cell cycle</keyword>
<keyword id="KW-0132">Cell division</keyword>
<keyword id="KW-0158">Chromosome</keyword>
<keyword id="KW-0175">Coiled coil</keyword>
<keyword id="KW-0963">Cytoplasm</keyword>
<keyword id="KW-0206">Cytoskeleton</keyword>
<keyword id="KW-0469">Meiosis</keyword>
<keyword id="KW-0498">Mitosis</keyword>
<keyword id="KW-0547">Nucleotide-binding</keyword>
<keyword id="KW-0539">Nucleus</keyword>
<keyword id="KW-1185">Reference proteome</keyword>
<reference evidence="6" key="1">
    <citation type="journal article" date="1998" name="Science">
        <title>Genome sequence of the nematode C. elegans: a platform for investigating biology.</title>
        <authorList>
            <consortium name="The C. elegans sequencing consortium"/>
        </authorList>
    </citation>
    <scope>NUCLEOTIDE SEQUENCE [LARGE SCALE GENOMIC DNA]</scope>
    <source>
        <strain evidence="6">Bristol N2</strain>
    </source>
</reference>
<reference evidence="5" key="2">
    <citation type="journal article" date="2004" name="J. Cell Biol.">
        <title>Loss of KLP-19 polar ejection force causes misorientation and missegregation of holocentric chromosomes.</title>
        <authorList>
            <person name="Powers J."/>
            <person name="Rose D.J."/>
            <person name="Saunders A."/>
            <person name="Dunkelbarger S."/>
            <person name="Strome S."/>
            <person name="Saxton W.M."/>
        </authorList>
    </citation>
    <scope>FUNCTION</scope>
    <scope>SUBCELLULAR LOCATION</scope>
    <scope>TISSUE SPECIFICITY</scope>
    <scope>DEVELOPMENTAL STAGE</scope>
    <scope>DISRUPTION PHENOTYPE</scope>
</reference>
<name>KLP19_CAEEL</name>